<keyword id="KW-0963">Cytoplasm</keyword>
<keyword id="KW-0413">Isomerase</keyword>
<keyword id="KW-0627">Porphyrin biosynthesis</keyword>
<keyword id="KW-0663">Pyridoxal phosphate</keyword>
<keyword id="KW-1185">Reference proteome</keyword>
<dbReference type="EC" id="5.4.3.8" evidence="1"/>
<dbReference type="EMBL" id="CP001154">
    <property type="protein sequence ID" value="ACO73014.1"/>
    <property type="molecule type" value="Genomic_DNA"/>
</dbReference>
<dbReference type="RefSeq" id="WP_012695509.1">
    <property type="nucleotide sequence ID" value="NC_012559.1"/>
</dbReference>
<dbReference type="SMR" id="C1D9B6"/>
<dbReference type="STRING" id="557598.LHK_00018"/>
<dbReference type="KEGG" id="lhk:LHK_00018"/>
<dbReference type="eggNOG" id="COG0001">
    <property type="taxonomic scope" value="Bacteria"/>
</dbReference>
<dbReference type="HOGENOM" id="CLU_016922_1_5_4"/>
<dbReference type="UniPathway" id="UPA00251">
    <property type="reaction ID" value="UER00317"/>
</dbReference>
<dbReference type="Proteomes" id="UP000002010">
    <property type="component" value="Chromosome"/>
</dbReference>
<dbReference type="GO" id="GO:0005737">
    <property type="term" value="C:cytoplasm"/>
    <property type="evidence" value="ECO:0007669"/>
    <property type="project" value="UniProtKB-SubCell"/>
</dbReference>
<dbReference type="GO" id="GO:0042286">
    <property type="term" value="F:glutamate-1-semialdehyde 2,1-aminomutase activity"/>
    <property type="evidence" value="ECO:0007669"/>
    <property type="project" value="UniProtKB-UniRule"/>
</dbReference>
<dbReference type="GO" id="GO:0030170">
    <property type="term" value="F:pyridoxal phosphate binding"/>
    <property type="evidence" value="ECO:0007669"/>
    <property type="project" value="InterPro"/>
</dbReference>
<dbReference type="GO" id="GO:0008483">
    <property type="term" value="F:transaminase activity"/>
    <property type="evidence" value="ECO:0007669"/>
    <property type="project" value="InterPro"/>
</dbReference>
<dbReference type="GO" id="GO:0006782">
    <property type="term" value="P:protoporphyrinogen IX biosynthetic process"/>
    <property type="evidence" value="ECO:0007669"/>
    <property type="project" value="UniProtKB-UniRule"/>
</dbReference>
<dbReference type="CDD" id="cd00610">
    <property type="entry name" value="OAT_like"/>
    <property type="match status" value="1"/>
</dbReference>
<dbReference type="FunFam" id="3.40.640.10:FF:000021">
    <property type="entry name" value="Glutamate-1-semialdehyde 2,1-aminomutase"/>
    <property type="match status" value="1"/>
</dbReference>
<dbReference type="Gene3D" id="3.90.1150.10">
    <property type="entry name" value="Aspartate Aminotransferase, domain 1"/>
    <property type="match status" value="1"/>
</dbReference>
<dbReference type="Gene3D" id="3.40.640.10">
    <property type="entry name" value="Type I PLP-dependent aspartate aminotransferase-like (Major domain)"/>
    <property type="match status" value="1"/>
</dbReference>
<dbReference type="HAMAP" id="MF_00375">
    <property type="entry name" value="HemL_aminotrans_3"/>
    <property type="match status" value="1"/>
</dbReference>
<dbReference type="InterPro" id="IPR004639">
    <property type="entry name" value="4pyrrol_synth_GluAld_NH2Trfase"/>
</dbReference>
<dbReference type="InterPro" id="IPR005814">
    <property type="entry name" value="Aminotrans_3"/>
</dbReference>
<dbReference type="InterPro" id="IPR049704">
    <property type="entry name" value="Aminotrans_3_PPA_site"/>
</dbReference>
<dbReference type="InterPro" id="IPR015424">
    <property type="entry name" value="PyrdxlP-dep_Trfase"/>
</dbReference>
<dbReference type="InterPro" id="IPR015421">
    <property type="entry name" value="PyrdxlP-dep_Trfase_major"/>
</dbReference>
<dbReference type="InterPro" id="IPR015422">
    <property type="entry name" value="PyrdxlP-dep_Trfase_small"/>
</dbReference>
<dbReference type="NCBIfam" id="TIGR00713">
    <property type="entry name" value="hemL"/>
    <property type="match status" value="1"/>
</dbReference>
<dbReference type="NCBIfam" id="NF000818">
    <property type="entry name" value="PRK00062.1"/>
    <property type="match status" value="1"/>
</dbReference>
<dbReference type="PANTHER" id="PTHR43713">
    <property type="entry name" value="GLUTAMATE-1-SEMIALDEHYDE 2,1-AMINOMUTASE"/>
    <property type="match status" value="1"/>
</dbReference>
<dbReference type="PANTHER" id="PTHR43713:SF3">
    <property type="entry name" value="GLUTAMATE-1-SEMIALDEHYDE 2,1-AMINOMUTASE 1, CHLOROPLASTIC-RELATED"/>
    <property type="match status" value="1"/>
</dbReference>
<dbReference type="Pfam" id="PF00202">
    <property type="entry name" value="Aminotran_3"/>
    <property type="match status" value="1"/>
</dbReference>
<dbReference type="SUPFAM" id="SSF53383">
    <property type="entry name" value="PLP-dependent transferases"/>
    <property type="match status" value="1"/>
</dbReference>
<dbReference type="PROSITE" id="PS00600">
    <property type="entry name" value="AA_TRANSFER_CLASS_3"/>
    <property type="match status" value="1"/>
</dbReference>
<reference key="1">
    <citation type="journal article" date="2009" name="PLoS Genet.">
        <title>The complete genome and proteome of Laribacter hongkongensis reveal potential mechanisms for adaptations to different temperatures and habitats.</title>
        <authorList>
            <person name="Woo P.C.Y."/>
            <person name="Lau S.K.P."/>
            <person name="Tse H."/>
            <person name="Teng J.L.L."/>
            <person name="Curreem S.O."/>
            <person name="Tsang A.K.L."/>
            <person name="Fan R.Y.Y."/>
            <person name="Wong G.K.M."/>
            <person name="Huang Y."/>
            <person name="Loman N.J."/>
            <person name="Snyder L.A.S."/>
            <person name="Cai J.J."/>
            <person name="Huang J.-D."/>
            <person name="Mak W."/>
            <person name="Pallen M.J."/>
            <person name="Lok S."/>
            <person name="Yuen K.-Y."/>
        </authorList>
    </citation>
    <scope>NUCLEOTIDE SEQUENCE [LARGE SCALE GENOMIC DNA]</scope>
    <source>
        <strain>HLHK9</strain>
    </source>
</reference>
<name>GSA_LARHH</name>
<protein>
    <recommendedName>
        <fullName evidence="1">Glutamate-1-semialdehyde 2,1-aminomutase</fullName>
        <shortName evidence="1">GSA</shortName>
        <ecNumber evidence="1">5.4.3.8</ecNumber>
    </recommendedName>
    <alternativeName>
        <fullName evidence="1">Glutamate-1-semialdehyde aminotransferase</fullName>
        <shortName evidence="1">GSA-AT</shortName>
    </alternativeName>
</protein>
<organism>
    <name type="scientific">Laribacter hongkongensis (strain HLHK9)</name>
    <dbReference type="NCBI Taxonomy" id="557598"/>
    <lineage>
        <taxon>Bacteria</taxon>
        <taxon>Pseudomonadati</taxon>
        <taxon>Pseudomonadota</taxon>
        <taxon>Betaproteobacteria</taxon>
        <taxon>Neisseriales</taxon>
        <taxon>Aquaspirillaceae</taxon>
        <taxon>Laribacter</taxon>
    </lineage>
</organism>
<sequence length="425" mass="44962">MDRNQQLFERAKHVIPGGVNSPVRAFGSVGGSPRFIKRAQGAYMWDADDRRLIDYIGSWGPMILGHAHPAVVEAVQQAAVHGLSFGTPTEAEIGIAEEICKLMPSIERVRLVSSGTEATMSAIRLARGFTGRDAIIKFEGCYHGHSDSLLVKAGSGLLTFGNPSSAGVPEDFTRHTLVLEYNNVEQLERTFAEIGERIACVILEPVAGNMNLIRPSAAFVQALRTLTQQHGSVLIYDEVMTGFRVALGGAQSLHGIQPDLTTLGKVVGGGMPIGAFGGRADIMNCIAPLGSVYQAGTLSGNPVAVAAGLATLRLIQQPGFYDALAARTARLVDGMVAAAREAGIPFSGDCVGGMFGLYFAADVPTSYAEVTASDRERFNAFFHAMLEAGVYLAPSAYEAGFVSAAHTDADIDATVDAARQAFARI</sequence>
<proteinExistence type="inferred from homology"/>
<evidence type="ECO:0000255" key="1">
    <source>
        <dbReference type="HAMAP-Rule" id="MF_00375"/>
    </source>
</evidence>
<comment type="catalytic activity">
    <reaction evidence="1">
        <text>(S)-4-amino-5-oxopentanoate = 5-aminolevulinate</text>
        <dbReference type="Rhea" id="RHEA:14265"/>
        <dbReference type="ChEBI" id="CHEBI:57501"/>
        <dbReference type="ChEBI" id="CHEBI:356416"/>
        <dbReference type="EC" id="5.4.3.8"/>
    </reaction>
</comment>
<comment type="cofactor">
    <cofactor evidence="1">
        <name>pyridoxal 5'-phosphate</name>
        <dbReference type="ChEBI" id="CHEBI:597326"/>
    </cofactor>
</comment>
<comment type="pathway">
    <text evidence="1">Porphyrin-containing compound metabolism; protoporphyrin-IX biosynthesis; 5-aminolevulinate from L-glutamyl-tRNA(Glu): step 2/2.</text>
</comment>
<comment type="subunit">
    <text evidence="1">Homodimer.</text>
</comment>
<comment type="subcellular location">
    <subcellularLocation>
        <location evidence="1">Cytoplasm</location>
    </subcellularLocation>
</comment>
<comment type="similarity">
    <text evidence="1">Belongs to the class-III pyridoxal-phosphate-dependent aminotransferase family. HemL subfamily.</text>
</comment>
<gene>
    <name evidence="1" type="primary">hemL</name>
    <name type="ordered locus">LHK_00018</name>
</gene>
<feature type="chain" id="PRO_1000201024" description="Glutamate-1-semialdehyde 2,1-aminomutase">
    <location>
        <begin position="1"/>
        <end position="425"/>
    </location>
</feature>
<feature type="modified residue" description="N6-(pyridoxal phosphate)lysine" evidence="1">
    <location>
        <position position="265"/>
    </location>
</feature>
<accession>C1D9B6</accession>